<protein>
    <recommendedName>
        <fullName>Glyceraldehyde-3-phosphate dehydrogenase</fullName>
        <shortName>GAPDH</shortName>
        <ecNumber evidence="1">1.2.1.12</ecNumber>
    </recommendedName>
    <alternativeName>
        <fullName evidence="7">Peptidyl-cysteine S-nitrosylase GAPDH</fullName>
        <ecNumber evidence="2">2.6.99.-</ecNumber>
    </alternativeName>
</protein>
<accession>P17244</accession>
<reference key="1">
    <citation type="journal article" date="1990" name="Nucleic Acids Res.">
        <title>Nucleotide sequence of hamster glyceraldehyde-3-phosphate dehydrogenase mRNA.</title>
        <authorList>
            <person name="Vincent S."/>
            <person name="Fort P."/>
        </authorList>
    </citation>
    <scope>NUCLEOTIDE SEQUENCE [MRNA]</scope>
    <source>
        <tissue>Lung</tissue>
    </source>
</reference>
<evidence type="ECO:0000250" key="1">
    <source>
        <dbReference type="UniProtKB" id="P04406"/>
    </source>
</evidence>
<evidence type="ECO:0000250" key="2">
    <source>
        <dbReference type="UniProtKB" id="P04797"/>
    </source>
</evidence>
<evidence type="ECO:0000250" key="3">
    <source>
        <dbReference type="UniProtKB" id="P10096"/>
    </source>
</evidence>
<evidence type="ECO:0000250" key="4">
    <source>
        <dbReference type="UniProtKB" id="P16858"/>
    </source>
</evidence>
<evidence type="ECO:0000250" key="5">
    <source>
        <dbReference type="UniProtKB" id="P22513"/>
    </source>
</evidence>
<evidence type="ECO:0000255" key="6">
    <source>
        <dbReference type="PROSITE-ProRule" id="PRU10009"/>
    </source>
</evidence>
<evidence type="ECO:0000305" key="7"/>
<organism>
    <name type="scientific">Cricetulus griseus</name>
    <name type="common">Chinese hamster</name>
    <name type="synonym">Cricetulus barabensis griseus</name>
    <dbReference type="NCBI Taxonomy" id="10029"/>
    <lineage>
        <taxon>Eukaryota</taxon>
        <taxon>Metazoa</taxon>
        <taxon>Chordata</taxon>
        <taxon>Craniata</taxon>
        <taxon>Vertebrata</taxon>
        <taxon>Euteleostomi</taxon>
        <taxon>Mammalia</taxon>
        <taxon>Eutheria</taxon>
        <taxon>Euarchontoglires</taxon>
        <taxon>Glires</taxon>
        <taxon>Rodentia</taxon>
        <taxon>Myomorpha</taxon>
        <taxon>Muroidea</taxon>
        <taxon>Cricetidae</taxon>
        <taxon>Cricetinae</taxon>
        <taxon>Cricetulus</taxon>
    </lineage>
</organism>
<gene>
    <name type="primary">GAPDH</name>
    <name type="synonym">GAPD</name>
</gene>
<comment type="function">
    <text evidence="1 2">Has both glyceraldehyde-3-phosphate dehydrogenase and nitrosylase activities, thereby playing a role in glycolysis and nuclear functions, respectively. Glyceraldehyde-3-phosphate dehydrogenase is a key enzyme in glycolysis that catalyzes the first step of the pathway by converting D-glyceraldehyde 3-phosphate (G3P) into 3-phospho-D-glyceroyl phosphate (By similarity). Modulates the organization and assembly of the cytoskeleton. Facilitates the CHP1-dependent microtubule and membrane associations through its ability to stimulate the binding of CHP1 to microtubules (By similarity). Component of the GAIT (gamma interferon-activated inhibitor of translation) complex which mediates interferon-gamma-induced transcript-selective translation inhibition in inflammation processes. Upon interferon-gamma treatment assembles into the GAIT complex which binds to stem loop-containing GAIT elements in the 3'-UTR of diverse inflammatory mRNAs (such as ceruplasmin) and suppresses their translation. Also plays a role in innate immunity by promoting TNF-induced NF-kappa-B activation and type I interferon production, via interaction with TRAF2 and TRAF3, respectively (By similarity). Participates in nuclear events including transcription, RNA transport, DNA replication and apoptosis. Nuclear functions are probably due to the nitrosylase activity that mediates cysteine S-nitrosylation of nuclear target proteins such as SIRT1, HDAC2 and PRKDC (By similarity).</text>
</comment>
<comment type="catalytic activity">
    <reaction evidence="1 6">
        <text>D-glyceraldehyde 3-phosphate + phosphate + NAD(+) = (2R)-3-phospho-glyceroyl phosphate + NADH + H(+)</text>
        <dbReference type="Rhea" id="RHEA:10300"/>
        <dbReference type="ChEBI" id="CHEBI:15378"/>
        <dbReference type="ChEBI" id="CHEBI:43474"/>
        <dbReference type="ChEBI" id="CHEBI:57540"/>
        <dbReference type="ChEBI" id="CHEBI:57604"/>
        <dbReference type="ChEBI" id="CHEBI:57945"/>
        <dbReference type="ChEBI" id="CHEBI:59776"/>
        <dbReference type="EC" id="1.2.1.12"/>
    </reaction>
</comment>
<comment type="catalytic activity">
    <reaction evidence="2">
        <text>S-nitroso-L-cysteinyl-[GAPDH] + L-cysteinyl-[protein] = L-cysteinyl-[GAPDH] + S-nitroso-L-cysteinyl-[protein]</text>
        <dbReference type="Rhea" id="RHEA:66684"/>
        <dbReference type="Rhea" id="RHEA-COMP:10131"/>
        <dbReference type="Rhea" id="RHEA-COMP:17089"/>
        <dbReference type="Rhea" id="RHEA-COMP:17090"/>
        <dbReference type="Rhea" id="RHEA-COMP:17091"/>
        <dbReference type="ChEBI" id="CHEBI:29950"/>
        <dbReference type="ChEBI" id="CHEBI:149494"/>
    </reaction>
    <physiologicalReaction direction="left-to-right" evidence="2">
        <dbReference type="Rhea" id="RHEA:66685"/>
    </physiologicalReaction>
</comment>
<comment type="activity regulation">
    <text evidence="2">Glyceraldehyde-3-phosphate dehydrogenase activity is inhibited by fumarate, via the formation of S-(2-succinyl)cysteine residues.</text>
</comment>
<comment type="pathway">
    <text>Carbohydrate degradation; glycolysis; pyruvate from D-glyceraldehyde 3-phosphate: step 1/5.</text>
</comment>
<comment type="subunit">
    <text evidence="1 2 3">Homotetramer (By similarity). Interacts with TPPP; the interaction is direct (By similarity). Interacts (when S-nitrosylated) with SIAH1; leading to nuclear translocation. Interacts with RILPL1/GOSPEL, leading to prevent the interaction between GAPDH and SIAH1 and prevent nuclear translocation. Interacts with CHP1; the interaction increases the binding of CHP1 with microtubules. Associates with microtubules (By similarity). Interacts with EIF1AD, USP25, PRKCI and WARS1. Interacts with phosphorylated RPL13A; inhibited by oxidatively-modified low-densitity lipoprotein (LDL(ox)). Component of the GAIT complex. Interacts with FKBP6; leading to inhibit GAPDH catalytic activity. Interacts with TRAF2, promoting TRAF2 ubiquitination. Interacts with TRAF3, promoting TRAF3 ubiquitination (By similarity).</text>
</comment>
<comment type="subcellular location">
    <subcellularLocation>
        <location evidence="2">Cytoplasm</location>
        <location evidence="2">Cytosol</location>
    </subcellularLocation>
    <subcellularLocation>
        <location evidence="2">Cytoplasm</location>
        <location evidence="2">Cytoskeleton</location>
    </subcellularLocation>
    <subcellularLocation>
        <location evidence="2">Nucleus</location>
    </subcellularLocation>
    <text evidence="2">Translocates to the nucleus following S-nitrosylation and interaction with SIAH1, which contains a nuclear localization signal. Colocalizes with CHP1 to small punctate structures along the microtubules tracks.</text>
</comment>
<comment type="domain">
    <text evidence="1">The [IL]-x-C-x-x-[DE] motif is a proposed target motif for cysteine S-nitrosylation mediated by the iNOS-S100A8/A9 transnitrosylase complex.</text>
</comment>
<comment type="PTM">
    <text evidence="1">ISGylated.</text>
</comment>
<comment type="PTM">
    <text evidence="1 2">S-nitrosylation of Cys-150 leads to interaction with SIAH1, followed by translocation to the nucleus S-nitrosylation of Cys-245 is induced by interferon-gamma and LDL(ox) implicating the iNOS-S100A8/9 transnitrosylase complex and seems to prevent interaction with phosphorylated RPL13A and to interfere with GAIT complex activity (By similarity).</text>
</comment>
<comment type="PTM">
    <text evidence="4">Sulfhydration at Cys-150 increases catalytic activity.</text>
</comment>
<comment type="PTM">
    <text evidence="1">Oxidative stress can promote the formation of high molecular weight disulfide-linked GAPDH aggregates, through a process called nucleocytoplasmic coagulation.</text>
</comment>
<comment type="similarity">
    <text evidence="7">Belongs to the glyceraldehyde-3-phosphate dehydrogenase family.</text>
</comment>
<name>G3P_CRIGR</name>
<feature type="chain" id="PRO_0000145484" description="Glyceraldehyde-3-phosphate dehydrogenase">
    <location>
        <begin position="1"/>
        <end position="333"/>
    </location>
</feature>
<feature type="region of interest" description="Interaction with WARS1" evidence="1">
    <location>
        <begin position="1"/>
        <end position="146"/>
    </location>
</feature>
<feature type="short sequence motif" description="[IL]-x-C-x-x-[DE] motif" evidence="1">
    <location>
        <begin position="243"/>
        <end position="248"/>
    </location>
</feature>
<feature type="active site" description="Nucleophile" evidence="6">
    <location>
        <position position="150"/>
    </location>
</feature>
<feature type="binding site" evidence="1">
    <location>
        <begin position="11"/>
        <end position="12"/>
    </location>
    <ligand>
        <name>NAD(+)</name>
        <dbReference type="ChEBI" id="CHEBI:57540"/>
    </ligand>
</feature>
<feature type="binding site" evidence="1">
    <location>
        <position position="33"/>
    </location>
    <ligand>
        <name>NAD(+)</name>
        <dbReference type="ChEBI" id="CHEBI:57540"/>
    </ligand>
</feature>
<feature type="binding site" evidence="1">
    <location>
        <position position="78"/>
    </location>
    <ligand>
        <name>NAD(+)</name>
        <dbReference type="ChEBI" id="CHEBI:57540"/>
    </ligand>
</feature>
<feature type="binding site" evidence="1">
    <location>
        <position position="120"/>
    </location>
    <ligand>
        <name>NAD(+)</name>
        <dbReference type="ChEBI" id="CHEBI:57540"/>
    </ligand>
</feature>
<feature type="binding site" evidence="5">
    <location>
        <begin position="149"/>
        <end position="151"/>
    </location>
    <ligand>
        <name>D-glyceraldehyde 3-phosphate</name>
        <dbReference type="ChEBI" id="CHEBI:59776"/>
    </ligand>
</feature>
<feature type="binding site" evidence="5">
    <location>
        <position position="180"/>
    </location>
    <ligand>
        <name>D-glyceraldehyde 3-phosphate</name>
        <dbReference type="ChEBI" id="CHEBI:59776"/>
    </ligand>
</feature>
<feature type="binding site" evidence="5">
    <location>
        <begin position="209"/>
        <end position="210"/>
    </location>
    <ligand>
        <name>D-glyceraldehyde 3-phosphate</name>
        <dbReference type="ChEBI" id="CHEBI:59776"/>
    </ligand>
</feature>
<feature type="binding site" evidence="5">
    <location>
        <position position="232"/>
    </location>
    <ligand>
        <name>D-glyceraldehyde 3-phosphate</name>
        <dbReference type="ChEBI" id="CHEBI:59776"/>
    </ligand>
</feature>
<feature type="binding site" evidence="1">
    <location>
        <position position="314"/>
    </location>
    <ligand>
        <name>NAD(+)</name>
        <dbReference type="ChEBI" id="CHEBI:57540"/>
    </ligand>
</feature>
<feature type="site" description="Activates thiol group during catalysis" evidence="1">
    <location>
        <position position="177"/>
    </location>
</feature>
<feature type="modified residue" description="N6,N6-dimethyllysine" evidence="1">
    <location>
        <position position="3"/>
    </location>
</feature>
<feature type="modified residue" description="Deamidated asparagine" evidence="1">
    <location>
        <position position="7"/>
    </location>
</feature>
<feature type="modified residue" description="Phosphotyrosine" evidence="1">
    <location>
        <position position="40"/>
    </location>
</feature>
<feature type="modified residue" description="N6-acetyllysine" evidence="1">
    <location>
        <position position="59"/>
    </location>
</feature>
<feature type="modified residue" description="Deamidated asparagine" evidence="1">
    <location>
        <position position="62"/>
    </location>
</feature>
<feature type="modified residue" description="N6,N6-dimethyllysine" evidence="1">
    <location>
        <position position="64"/>
    </location>
</feature>
<feature type="modified residue" description="Deamidated asparagine" evidence="1">
    <location>
        <position position="68"/>
    </location>
</feature>
<feature type="modified residue" description="Phosphothreonine" evidence="1">
    <location>
        <position position="73"/>
    </location>
</feature>
<feature type="modified residue" description="Phosphoserine" evidence="1">
    <location>
        <position position="120"/>
    </location>
</feature>
<feature type="modified residue" description="Phosphoserine" evidence="1">
    <location>
        <position position="146"/>
    </location>
</feature>
<feature type="modified residue" description="Deamidated asparagine" evidence="1">
    <location>
        <position position="147"/>
    </location>
</feature>
<feature type="modified residue" description="Phosphoserine" evidence="1">
    <location>
        <position position="149"/>
    </location>
</feature>
<feature type="modified residue" description="ADP-ribosylcysteine; by autocatalysis; in irreversibly inhibited form" evidence="2">
    <location>
        <position position="150"/>
    </location>
</feature>
<feature type="modified residue" description="Cysteine persulfide" evidence="4">
    <location>
        <position position="150"/>
    </location>
</feature>
<feature type="modified residue" description="S-(2-succinyl)cysteine" evidence="2">
    <location>
        <position position="150"/>
    </location>
</feature>
<feature type="modified residue" description="S-nitrosocysteine; in reversibly inhibited form" evidence="2">
    <location>
        <position position="150"/>
    </location>
</feature>
<feature type="modified residue" description="Phosphothreonine" evidence="1">
    <location>
        <position position="151"/>
    </location>
</feature>
<feature type="modified residue" description="Deamidated asparagine" evidence="1">
    <location>
        <position position="153"/>
    </location>
</feature>
<feature type="modified residue" description="Phosphothreonine" evidence="1">
    <location>
        <position position="175"/>
    </location>
</feature>
<feature type="modified residue" description="Phosphothreonine" evidence="1">
    <location>
        <position position="180"/>
    </location>
</feature>
<feature type="modified residue" description="Phosphothreonine" evidence="1">
    <location>
        <position position="182"/>
    </location>
</feature>
<feature type="modified residue" description="N6,N6-dimethyllysine; alternate" evidence="1">
    <location>
        <position position="192"/>
    </location>
</feature>
<feature type="modified residue" description="N6-acetyllysine; alternate" evidence="1">
    <location>
        <position position="192"/>
    </location>
</feature>
<feature type="modified residue" description="N6-malonyllysine; alternate" evidence="1">
    <location>
        <position position="192"/>
    </location>
</feature>
<feature type="modified residue" description="Phosphothreonine" evidence="1">
    <location>
        <position position="209"/>
    </location>
</feature>
<feature type="modified residue" description="N6,N6-dimethyllysine; alternate" evidence="1">
    <location>
        <position position="213"/>
    </location>
</feature>
<feature type="modified residue" description="N6-malonyllysine; alternate" evidence="1">
    <location>
        <position position="213"/>
    </location>
</feature>
<feature type="modified residue" description="N6-acetyllysine" evidence="1">
    <location>
        <position position="217"/>
    </location>
</feature>
<feature type="modified residue" description="Deamidated asparagine" evidence="1">
    <location>
        <position position="223"/>
    </location>
</feature>
<feature type="modified residue" description="N6,N6-dimethyllysine; alternate" evidence="1">
    <location>
        <position position="225"/>
    </location>
</feature>
<feature type="modified residue" description="N6-acetyllysine; alternate" evidence="1">
    <location>
        <position position="225"/>
    </location>
</feature>
<feature type="modified residue" description="Phosphothreonine" evidence="1">
    <location>
        <position position="227"/>
    </location>
</feature>
<feature type="modified residue" description="Phosphothreonine" evidence="1">
    <location>
        <position position="235"/>
    </location>
</feature>
<feature type="modified residue" description="Phosphoserine" evidence="1">
    <location>
        <position position="239"/>
    </location>
</feature>
<feature type="modified residue" description="S-(2-succinyl)cysteine" evidence="2">
    <location>
        <position position="245"/>
    </location>
</feature>
<feature type="modified residue" description="S-nitrosocysteine" evidence="1">
    <location>
        <position position="245"/>
    </location>
</feature>
<feature type="modified residue" description="N6-acetyllysine" evidence="1">
    <location>
        <position position="252"/>
    </location>
</feature>
<feature type="modified residue" description="N6,N6-dimethyllysine" evidence="1">
    <location>
        <position position="258"/>
    </location>
</feature>
<feature type="modified residue" description="N6,N6-dimethyllysine" evidence="1">
    <location>
        <position position="261"/>
    </location>
</feature>
<feature type="modified residue" description="Phosphoserine" evidence="1">
    <location>
        <position position="310"/>
    </location>
</feature>
<feature type="modified residue" description="Deamidated asparagine" evidence="1">
    <location>
        <position position="314"/>
    </location>
</feature>
<feature type="modified residue" description="Phosphoserine" evidence="1">
    <location>
        <position position="331"/>
    </location>
</feature>
<feature type="modified residue" description="N6,N6-dimethyllysine" evidence="1">
    <location>
        <position position="332"/>
    </location>
</feature>
<feature type="cross-link" description="Glycyl lysine isopeptide (Lys-Gly) (interchain with G-Cter in SUMO2)" evidence="1">
    <location>
        <position position="184"/>
    </location>
</feature>
<sequence>MVKVGVNGFGRIGRLVTRAAFTSGKVEVVAINDPFIDLNYMVYMFQYDSTHGKFKGTVKAENGKLVINGKAITIFQERDPANIKWGDAGAEYVVESTGVFTTMEKAGAHLKGGAKRVIISAPSADAPMFVMGVNQDKYDNSLKIVSNASCTTNCLAPLAKVIHDNFGIVEGLMTTVHAITATQKTVDGPSGKLWRDGRGAAQNIIPASTGAAKAVGKVIPELNGKLTGMAFRVPTPNVSVVDLTCRLEKPAKYEDIKKVVKQASEGPLKGILGYTEDQVVSCDFNSDSHSSTFDAGAGIALNDNFVKLISWYDNEFGYSNRVVDLMAYMASKE</sequence>
<dbReference type="EC" id="1.2.1.12" evidence="1"/>
<dbReference type="EC" id="2.6.99.-" evidence="2"/>
<dbReference type="EMBL" id="X52123">
    <property type="protein sequence ID" value="CAA36368.1"/>
    <property type="molecule type" value="mRNA"/>
</dbReference>
<dbReference type="PIR" id="S10221">
    <property type="entry name" value="DEHYG"/>
</dbReference>
<dbReference type="RefSeq" id="NP_001231783.1">
    <property type="nucleotide sequence ID" value="NM_001244854.2"/>
</dbReference>
<dbReference type="SMR" id="P17244"/>
<dbReference type="MoonProt" id="P17244"/>
<dbReference type="PaxDb" id="10029-NP_001231783.1"/>
<dbReference type="GeneID" id="100736557"/>
<dbReference type="KEGG" id="cge:100736557"/>
<dbReference type="CTD" id="2597"/>
<dbReference type="eggNOG" id="KOG0657">
    <property type="taxonomic scope" value="Eukaryota"/>
</dbReference>
<dbReference type="OrthoDB" id="9553738at2759"/>
<dbReference type="UniPathway" id="UPA00109">
    <property type="reaction ID" value="UER00184"/>
</dbReference>
<dbReference type="Proteomes" id="UP000694386">
    <property type="component" value="Unplaced"/>
</dbReference>
<dbReference type="Proteomes" id="UP001108280">
    <property type="component" value="Chromosome 8"/>
</dbReference>
<dbReference type="GO" id="GO:0005737">
    <property type="term" value="C:cytoplasm"/>
    <property type="evidence" value="ECO:0000250"/>
    <property type="project" value="UniProtKB"/>
</dbReference>
<dbReference type="GO" id="GO:0005829">
    <property type="term" value="C:cytosol"/>
    <property type="evidence" value="ECO:0000250"/>
    <property type="project" value="UniProtKB"/>
</dbReference>
<dbReference type="GO" id="GO:0097452">
    <property type="term" value="C:GAIT complex"/>
    <property type="evidence" value="ECO:0000250"/>
    <property type="project" value="UniProtKB"/>
</dbReference>
<dbReference type="GO" id="GO:0015630">
    <property type="term" value="C:microtubule cytoskeleton"/>
    <property type="evidence" value="ECO:0000250"/>
    <property type="project" value="UniProtKB"/>
</dbReference>
<dbReference type="GO" id="GO:0005634">
    <property type="term" value="C:nucleus"/>
    <property type="evidence" value="ECO:0000250"/>
    <property type="project" value="UniProtKB"/>
</dbReference>
<dbReference type="GO" id="GO:0004365">
    <property type="term" value="F:glyceraldehyde-3-phosphate dehydrogenase (NAD+) (phosphorylating) activity"/>
    <property type="evidence" value="ECO:0000250"/>
    <property type="project" value="UniProtKB"/>
</dbReference>
<dbReference type="GO" id="GO:0008017">
    <property type="term" value="F:microtubule binding"/>
    <property type="evidence" value="ECO:0000250"/>
    <property type="project" value="UniProtKB"/>
</dbReference>
<dbReference type="GO" id="GO:0051287">
    <property type="term" value="F:NAD binding"/>
    <property type="evidence" value="ECO:0007669"/>
    <property type="project" value="InterPro"/>
</dbReference>
<dbReference type="GO" id="GO:0050661">
    <property type="term" value="F:NADP binding"/>
    <property type="evidence" value="ECO:0007669"/>
    <property type="project" value="InterPro"/>
</dbReference>
<dbReference type="GO" id="GO:0035605">
    <property type="term" value="F:peptidyl-cysteine S-nitrosylase activity"/>
    <property type="evidence" value="ECO:0000250"/>
    <property type="project" value="UniProtKB"/>
</dbReference>
<dbReference type="GO" id="GO:0006006">
    <property type="term" value="P:glucose metabolic process"/>
    <property type="evidence" value="ECO:0007669"/>
    <property type="project" value="InterPro"/>
</dbReference>
<dbReference type="GO" id="GO:0006096">
    <property type="term" value="P:glycolytic process"/>
    <property type="evidence" value="ECO:0007669"/>
    <property type="project" value="UniProtKB-UniPathway"/>
</dbReference>
<dbReference type="GO" id="GO:0045087">
    <property type="term" value="P:innate immune response"/>
    <property type="evidence" value="ECO:0007669"/>
    <property type="project" value="UniProtKB-KW"/>
</dbReference>
<dbReference type="GO" id="GO:0000226">
    <property type="term" value="P:microtubule cytoskeleton organization"/>
    <property type="evidence" value="ECO:0000250"/>
    <property type="project" value="UniProtKB"/>
</dbReference>
<dbReference type="GO" id="GO:0051402">
    <property type="term" value="P:neuron apoptotic process"/>
    <property type="evidence" value="ECO:0000250"/>
    <property type="project" value="UniProtKB"/>
</dbReference>
<dbReference type="GO" id="GO:0035606">
    <property type="term" value="P:peptidyl-cysteine S-trans-nitrosylation"/>
    <property type="evidence" value="ECO:0000250"/>
    <property type="project" value="UniProtKB"/>
</dbReference>
<dbReference type="GO" id="GO:0043123">
    <property type="term" value="P:positive regulation of canonical NF-kappaB signal transduction"/>
    <property type="evidence" value="ECO:0000250"/>
    <property type="project" value="UniProtKB"/>
</dbReference>
<dbReference type="GO" id="GO:0032481">
    <property type="term" value="P:positive regulation of type I interferon production"/>
    <property type="evidence" value="ECO:0000250"/>
    <property type="project" value="UniProtKB"/>
</dbReference>
<dbReference type="GO" id="GO:0050821">
    <property type="term" value="P:protein stabilization"/>
    <property type="evidence" value="ECO:0000250"/>
    <property type="project" value="UniProtKB"/>
</dbReference>
<dbReference type="GO" id="GO:0006417">
    <property type="term" value="P:regulation of translation"/>
    <property type="evidence" value="ECO:0007669"/>
    <property type="project" value="UniProtKB-KW"/>
</dbReference>
<dbReference type="CDD" id="cd18126">
    <property type="entry name" value="GAPDH_I_C"/>
    <property type="match status" value="1"/>
</dbReference>
<dbReference type="CDD" id="cd05214">
    <property type="entry name" value="GAPDH_I_N"/>
    <property type="match status" value="1"/>
</dbReference>
<dbReference type="FunFam" id="3.30.360.10:FF:000001">
    <property type="entry name" value="Glyceraldehyde-3-phosphate dehydrogenase"/>
    <property type="match status" value="1"/>
</dbReference>
<dbReference type="FunFam" id="3.40.50.720:FF:001161">
    <property type="entry name" value="Glyceraldehyde-3-phosphate dehydrogenase"/>
    <property type="match status" value="1"/>
</dbReference>
<dbReference type="FunFam" id="3.40.50.720:FF:000636">
    <property type="entry name" value="Glyceraldehyde-3-phosphate dehydrogenase 2, cytosolic"/>
    <property type="match status" value="1"/>
</dbReference>
<dbReference type="Gene3D" id="3.30.360.10">
    <property type="entry name" value="Dihydrodipicolinate Reductase, domain 2"/>
    <property type="match status" value="1"/>
</dbReference>
<dbReference type="Gene3D" id="3.40.50.720">
    <property type="entry name" value="NAD(P)-binding Rossmann-like Domain"/>
    <property type="match status" value="1"/>
</dbReference>
<dbReference type="InterPro" id="IPR020831">
    <property type="entry name" value="GlycerAld/Erythrose_P_DH"/>
</dbReference>
<dbReference type="InterPro" id="IPR020830">
    <property type="entry name" value="GlycerAld_3-P_DH_AS"/>
</dbReference>
<dbReference type="InterPro" id="IPR020829">
    <property type="entry name" value="GlycerAld_3-P_DH_cat"/>
</dbReference>
<dbReference type="InterPro" id="IPR020828">
    <property type="entry name" value="GlycerAld_3-P_DH_NAD(P)-bd"/>
</dbReference>
<dbReference type="InterPro" id="IPR006424">
    <property type="entry name" value="Glyceraldehyde-3-P_DH_1"/>
</dbReference>
<dbReference type="InterPro" id="IPR036291">
    <property type="entry name" value="NAD(P)-bd_dom_sf"/>
</dbReference>
<dbReference type="NCBIfam" id="TIGR01534">
    <property type="entry name" value="GAPDH-I"/>
    <property type="match status" value="1"/>
</dbReference>
<dbReference type="PANTHER" id="PTHR10836">
    <property type="entry name" value="GLYCERALDEHYDE 3-PHOSPHATE DEHYDROGENASE"/>
    <property type="match status" value="1"/>
</dbReference>
<dbReference type="PANTHER" id="PTHR10836:SF111">
    <property type="entry name" value="GLYCERALDEHYDE-3-PHOSPHATE DEHYDROGENASE"/>
    <property type="match status" value="1"/>
</dbReference>
<dbReference type="Pfam" id="PF02800">
    <property type="entry name" value="Gp_dh_C"/>
    <property type="match status" value="1"/>
</dbReference>
<dbReference type="Pfam" id="PF00044">
    <property type="entry name" value="Gp_dh_N"/>
    <property type="match status" value="1"/>
</dbReference>
<dbReference type="PIRSF" id="PIRSF000149">
    <property type="entry name" value="GAP_DH"/>
    <property type="match status" value="1"/>
</dbReference>
<dbReference type="PRINTS" id="PR00078">
    <property type="entry name" value="G3PDHDRGNASE"/>
</dbReference>
<dbReference type="SMART" id="SM00846">
    <property type="entry name" value="Gp_dh_N"/>
    <property type="match status" value="1"/>
</dbReference>
<dbReference type="SUPFAM" id="SSF55347">
    <property type="entry name" value="Glyceraldehyde-3-phosphate dehydrogenase-like, C-terminal domain"/>
    <property type="match status" value="1"/>
</dbReference>
<dbReference type="SUPFAM" id="SSF51735">
    <property type="entry name" value="NAD(P)-binding Rossmann-fold domains"/>
    <property type="match status" value="1"/>
</dbReference>
<dbReference type="PROSITE" id="PS00071">
    <property type="entry name" value="GAPDH"/>
    <property type="match status" value="1"/>
</dbReference>
<proteinExistence type="evidence at transcript level"/>
<keyword id="KW-0007">Acetylation</keyword>
<keyword id="KW-0013">ADP-ribosylation</keyword>
<keyword id="KW-0053">Apoptosis</keyword>
<keyword id="KW-0963">Cytoplasm</keyword>
<keyword id="KW-0206">Cytoskeleton</keyword>
<keyword id="KW-0324">Glycolysis</keyword>
<keyword id="KW-0391">Immunity</keyword>
<keyword id="KW-0399">Innate immunity</keyword>
<keyword id="KW-1017">Isopeptide bond</keyword>
<keyword id="KW-0488">Methylation</keyword>
<keyword id="KW-0520">NAD</keyword>
<keyword id="KW-0539">Nucleus</keyword>
<keyword id="KW-0560">Oxidoreductase</keyword>
<keyword id="KW-0597">Phosphoprotein</keyword>
<keyword id="KW-0702">S-nitrosylation</keyword>
<keyword id="KW-0808">Transferase</keyword>
<keyword id="KW-0810">Translation regulation</keyword>
<keyword id="KW-0832">Ubl conjugation</keyword>